<protein>
    <recommendedName>
        <fullName evidence="1">p-hydroxybenzoic acid efflux pump subunit AaeB</fullName>
        <shortName evidence="1">pHBA efflux pump protein B</shortName>
    </recommendedName>
</protein>
<sequence length="655" mass="73646">MGIFSIANQHIRFAVKLACAIVLALFIGFHFQLETPRWAVLTAAIVAAGPAFAAGGEPYSGAIRYRGMLRIIGTFIGCIAALIIIISMIRAPLLMILVCCVWAGFCTWISSLVRIENSYAWGLSGYTALIIVITIQTEPLLTPQFALERCSEIVIGIGCAILADLLFSPRSIKQEVDRELDSLLVAQYQLMQLCIKHGDSEEVDNAWGDLVRRTAALEGMRSNLNMESSRWVRANRRLKALNTLSLTLITQSCETYLIQNTRPELITDTFRELFETPVETVQDVHRQLKRMRRVIVWTGERETPVTLYSWVGAATRYLLLKRGVISNTKISATEEEILQGEPVVKVESAERHHAMVNFWRTTLSCILGTLFWLWTGWTSGNGAMVMIAVVTSLAMRLPNPRMVCIDFIYGTLAALPLGLLYFLVIIPNTQQSMLLLCLSLAVLGFFIGIEVQKRRLGSMGALASTINIIVLDNPMTFHFSQFLDSALGQIVGCMLAFIVILLVRDKSKDRTGRVLLNQFVSAAVSAMTTNVVRRKENRLPALYQQLFLLMNKFPGDLPKFRLALTMIIAHQRLRDAPIPVNEDLSVFHRQLRRTADHVISAGSDDKRRRYFGQLLDELDIYQEKLRIWEAPPQVTEPVKRLTGMLHKYQNALTDS</sequence>
<gene>
    <name evidence="1" type="primary">aaeB</name>
    <name type="ordered locus">SeSA_A3556</name>
</gene>
<keyword id="KW-0997">Cell inner membrane</keyword>
<keyword id="KW-1003">Cell membrane</keyword>
<keyword id="KW-0472">Membrane</keyword>
<keyword id="KW-0812">Transmembrane</keyword>
<keyword id="KW-1133">Transmembrane helix</keyword>
<keyword id="KW-0813">Transport</keyword>
<evidence type="ECO:0000255" key="1">
    <source>
        <dbReference type="HAMAP-Rule" id="MF_01545"/>
    </source>
</evidence>
<feature type="chain" id="PRO_1000146747" description="p-hydroxybenzoic acid efflux pump subunit AaeB">
    <location>
        <begin position="1"/>
        <end position="655"/>
    </location>
</feature>
<feature type="transmembrane region" description="Helical" evidence="1">
    <location>
        <begin position="13"/>
        <end position="33"/>
    </location>
</feature>
<feature type="transmembrane region" description="Helical" evidence="1">
    <location>
        <begin position="38"/>
        <end position="58"/>
    </location>
</feature>
<feature type="transmembrane region" description="Helical" evidence="1">
    <location>
        <begin position="69"/>
        <end position="89"/>
    </location>
</feature>
<feature type="transmembrane region" description="Helical" evidence="1">
    <location>
        <begin position="93"/>
        <end position="113"/>
    </location>
</feature>
<feature type="transmembrane region" description="Helical" evidence="1">
    <location>
        <begin position="121"/>
        <end position="141"/>
    </location>
</feature>
<feature type="transmembrane region" description="Helical" evidence="1">
    <location>
        <begin position="152"/>
        <end position="172"/>
    </location>
</feature>
<feature type="transmembrane region" description="Helical" evidence="1">
    <location>
        <begin position="370"/>
        <end position="390"/>
    </location>
</feature>
<feature type="transmembrane region" description="Helical" evidence="1">
    <location>
        <begin position="407"/>
        <end position="427"/>
    </location>
</feature>
<feature type="transmembrane region" description="Helical" evidence="1">
    <location>
        <begin position="431"/>
        <end position="451"/>
    </location>
</feature>
<feature type="transmembrane region" description="Helical" evidence="1">
    <location>
        <begin position="459"/>
        <end position="479"/>
    </location>
</feature>
<feature type="transmembrane region" description="Helical" evidence="1">
    <location>
        <begin position="482"/>
        <end position="502"/>
    </location>
</feature>
<name>AAEB_SALSV</name>
<dbReference type="EMBL" id="CP001127">
    <property type="protein sequence ID" value="ACF92220.1"/>
    <property type="molecule type" value="Genomic_DNA"/>
</dbReference>
<dbReference type="RefSeq" id="WP_000510913.1">
    <property type="nucleotide sequence ID" value="NC_011094.1"/>
</dbReference>
<dbReference type="SMR" id="B4TX72"/>
<dbReference type="KEGG" id="sew:SeSA_A3556"/>
<dbReference type="HOGENOM" id="CLU_027647_0_0_6"/>
<dbReference type="Proteomes" id="UP000001865">
    <property type="component" value="Chromosome"/>
</dbReference>
<dbReference type="GO" id="GO:0005886">
    <property type="term" value="C:plasma membrane"/>
    <property type="evidence" value="ECO:0007669"/>
    <property type="project" value="UniProtKB-SubCell"/>
</dbReference>
<dbReference type="GO" id="GO:0022857">
    <property type="term" value="F:transmembrane transporter activity"/>
    <property type="evidence" value="ECO:0007669"/>
    <property type="project" value="UniProtKB-UniRule"/>
</dbReference>
<dbReference type="GO" id="GO:0046942">
    <property type="term" value="P:carboxylic acid transport"/>
    <property type="evidence" value="ECO:0007669"/>
    <property type="project" value="InterPro"/>
</dbReference>
<dbReference type="HAMAP" id="MF_01545">
    <property type="entry name" value="AaeB"/>
    <property type="match status" value="1"/>
</dbReference>
<dbReference type="InterPro" id="IPR006726">
    <property type="entry name" value="PHBA_efflux_AaeB/fusaric-R"/>
</dbReference>
<dbReference type="InterPro" id="IPR023706">
    <property type="entry name" value="PHBA_efflux_pump_AaeB"/>
</dbReference>
<dbReference type="NCBIfam" id="NF007916">
    <property type="entry name" value="PRK10631.1"/>
    <property type="match status" value="1"/>
</dbReference>
<dbReference type="PANTHER" id="PTHR30509:SF9">
    <property type="entry name" value="MULTIDRUG RESISTANCE PROTEIN MDTO"/>
    <property type="match status" value="1"/>
</dbReference>
<dbReference type="PANTHER" id="PTHR30509">
    <property type="entry name" value="P-HYDROXYBENZOIC ACID EFFLUX PUMP SUBUNIT-RELATED"/>
    <property type="match status" value="1"/>
</dbReference>
<dbReference type="Pfam" id="PF04632">
    <property type="entry name" value="FUSC"/>
    <property type="match status" value="1"/>
</dbReference>
<reference key="1">
    <citation type="journal article" date="2011" name="J. Bacteriol.">
        <title>Comparative genomics of 28 Salmonella enterica isolates: evidence for CRISPR-mediated adaptive sublineage evolution.</title>
        <authorList>
            <person name="Fricke W.F."/>
            <person name="Mammel M.K."/>
            <person name="McDermott P.F."/>
            <person name="Tartera C."/>
            <person name="White D.G."/>
            <person name="Leclerc J.E."/>
            <person name="Ravel J."/>
            <person name="Cebula T.A."/>
        </authorList>
    </citation>
    <scope>NUCLEOTIDE SEQUENCE [LARGE SCALE GENOMIC DNA]</scope>
    <source>
        <strain>CVM19633</strain>
    </source>
</reference>
<proteinExistence type="inferred from homology"/>
<accession>B4TX72</accession>
<comment type="function">
    <text evidence="1">Forms an efflux pump with AaeA. Could function as a metabolic relief valve, allowing to eliminate certain compounds when they accumulate to high levels in the cell.</text>
</comment>
<comment type="subcellular location">
    <subcellularLocation>
        <location evidence="1">Cell inner membrane</location>
        <topology evidence="1">Multi-pass membrane protein</topology>
    </subcellularLocation>
</comment>
<comment type="similarity">
    <text evidence="1">Belongs to the aromatic acid exporter ArAE (TC 2.A.85) family.</text>
</comment>
<organism>
    <name type="scientific">Salmonella schwarzengrund (strain CVM19633)</name>
    <dbReference type="NCBI Taxonomy" id="439843"/>
    <lineage>
        <taxon>Bacteria</taxon>
        <taxon>Pseudomonadati</taxon>
        <taxon>Pseudomonadota</taxon>
        <taxon>Gammaproteobacteria</taxon>
        <taxon>Enterobacterales</taxon>
        <taxon>Enterobacteriaceae</taxon>
        <taxon>Salmonella</taxon>
    </lineage>
</organism>